<protein>
    <recommendedName>
        <fullName evidence="1">Nucleoid-associated protein CLD_0785</fullName>
    </recommendedName>
</protein>
<comment type="function">
    <text evidence="1">Binds to DNA and alters its conformation. May be involved in regulation of gene expression, nucleoid organization and DNA protection.</text>
</comment>
<comment type="subunit">
    <text evidence="1">Homodimer.</text>
</comment>
<comment type="subcellular location">
    <subcellularLocation>
        <location evidence="1">Cytoplasm</location>
        <location evidence="1">Nucleoid</location>
    </subcellularLocation>
</comment>
<comment type="similarity">
    <text evidence="1">Belongs to the YbaB/EbfC family.</text>
</comment>
<accession>B1IDW7</accession>
<feature type="chain" id="PRO_1000114603" description="Nucleoid-associated protein CLD_0785">
    <location>
        <begin position="1"/>
        <end position="113"/>
    </location>
</feature>
<feature type="region of interest" description="Disordered" evidence="2">
    <location>
        <begin position="93"/>
        <end position="113"/>
    </location>
</feature>
<feature type="compositionally biased region" description="Basic and acidic residues" evidence="2">
    <location>
        <begin position="93"/>
        <end position="102"/>
    </location>
</feature>
<reference key="1">
    <citation type="journal article" date="2007" name="PLoS ONE">
        <title>Analysis of the neurotoxin complex genes in Clostridium botulinum A1-A4 and B1 strains: BoNT/A3, /Ba4 and /B1 clusters are located within plasmids.</title>
        <authorList>
            <person name="Smith T.J."/>
            <person name="Hill K.K."/>
            <person name="Foley B.T."/>
            <person name="Detter J.C."/>
            <person name="Munk A.C."/>
            <person name="Bruce D.C."/>
            <person name="Doggett N.A."/>
            <person name="Smith L.A."/>
            <person name="Marks J.D."/>
            <person name="Xie G."/>
            <person name="Brettin T.S."/>
        </authorList>
    </citation>
    <scope>NUCLEOTIDE SEQUENCE [LARGE SCALE GENOMIC DNA]</scope>
    <source>
        <strain>Okra / Type B1</strain>
    </source>
</reference>
<proteinExistence type="inferred from homology"/>
<sequence>MARGGFPNMGGANMNNLMKQAQKLQQDMEKMQGEMEKKEFSATVGGGAVTAVANGKKQIVDIKIEPEVVDEDDIEMLEDLIMSACNEALKKAEEDTSSEVKRLTGGMNLPGMF</sequence>
<organism>
    <name type="scientific">Clostridium botulinum (strain Okra / Type B1)</name>
    <dbReference type="NCBI Taxonomy" id="498213"/>
    <lineage>
        <taxon>Bacteria</taxon>
        <taxon>Bacillati</taxon>
        <taxon>Bacillota</taxon>
        <taxon>Clostridia</taxon>
        <taxon>Eubacteriales</taxon>
        <taxon>Clostridiaceae</taxon>
        <taxon>Clostridium</taxon>
    </lineage>
</organism>
<gene>
    <name type="ordered locus">CLD_0785</name>
</gene>
<dbReference type="EMBL" id="CP000939">
    <property type="protein sequence ID" value="ACA46555.1"/>
    <property type="molecule type" value="Genomic_DNA"/>
</dbReference>
<dbReference type="RefSeq" id="WP_003359499.1">
    <property type="nucleotide sequence ID" value="NC_010516.1"/>
</dbReference>
<dbReference type="SMR" id="B1IDW7"/>
<dbReference type="KEGG" id="cbb:CLD_0785"/>
<dbReference type="HOGENOM" id="CLU_140930_1_0_9"/>
<dbReference type="Proteomes" id="UP000008541">
    <property type="component" value="Chromosome"/>
</dbReference>
<dbReference type="GO" id="GO:0043590">
    <property type="term" value="C:bacterial nucleoid"/>
    <property type="evidence" value="ECO:0007669"/>
    <property type="project" value="UniProtKB-UniRule"/>
</dbReference>
<dbReference type="GO" id="GO:0005829">
    <property type="term" value="C:cytosol"/>
    <property type="evidence" value="ECO:0007669"/>
    <property type="project" value="TreeGrafter"/>
</dbReference>
<dbReference type="GO" id="GO:0003677">
    <property type="term" value="F:DNA binding"/>
    <property type="evidence" value="ECO:0007669"/>
    <property type="project" value="UniProtKB-UniRule"/>
</dbReference>
<dbReference type="FunFam" id="3.30.1310.10:FF:000002">
    <property type="entry name" value="Nucleoid-associated protein IKC_06587"/>
    <property type="match status" value="1"/>
</dbReference>
<dbReference type="Gene3D" id="3.30.1310.10">
    <property type="entry name" value="Nucleoid-associated protein YbaB-like domain"/>
    <property type="match status" value="1"/>
</dbReference>
<dbReference type="HAMAP" id="MF_00274">
    <property type="entry name" value="DNA_YbaB_EbfC"/>
    <property type="match status" value="1"/>
</dbReference>
<dbReference type="InterPro" id="IPR036894">
    <property type="entry name" value="YbaB-like_sf"/>
</dbReference>
<dbReference type="InterPro" id="IPR004401">
    <property type="entry name" value="YbaB/EbfC"/>
</dbReference>
<dbReference type="NCBIfam" id="TIGR00103">
    <property type="entry name" value="DNA_YbaB_EbfC"/>
    <property type="match status" value="1"/>
</dbReference>
<dbReference type="PANTHER" id="PTHR33449">
    <property type="entry name" value="NUCLEOID-ASSOCIATED PROTEIN YBAB"/>
    <property type="match status" value="1"/>
</dbReference>
<dbReference type="PANTHER" id="PTHR33449:SF1">
    <property type="entry name" value="NUCLEOID-ASSOCIATED PROTEIN YBAB"/>
    <property type="match status" value="1"/>
</dbReference>
<dbReference type="Pfam" id="PF02575">
    <property type="entry name" value="YbaB_DNA_bd"/>
    <property type="match status" value="1"/>
</dbReference>
<dbReference type="PIRSF" id="PIRSF004555">
    <property type="entry name" value="UCP004555"/>
    <property type="match status" value="1"/>
</dbReference>
<dbReference type="SUPFAM" id="SSF82607">
    <property type="entry name" value="YbaB-like"/>
    <property type="match status" value="1"/>
</dbReference>
<evidence type="ECO:0000255" key="1">
    <source>
        <dbReference type="HAMAP-Rule" id="MF_00274"/>
    </source>
</evidence>
<evidence type="ECO:0000256" key="2">
    <source>
        <dbReference type="SAM" id="MobiDB-lite"/>
    </source>
</evidence>
<keyword id="KW-0963">Cytoplasm</keyword>
<keyword id="KW-0238">DNA-binding</keyword>
<name>Y785_CLOBK</name>